<protein>
    <recommendedName>
        <fullName evidence="1">Large ribosomal subunit protein uL15</fullName>
    </recommendedName>
    <alternativeName>
        <fullName evidence="3">50S ribosomal protein L15</fullName>
    </alternativeName>
</protein>
<feature type="chain" id="PRO_0000104827" description="Large ribosomal subunit protein uL15">
    <location>
        <begin position="1"/>
        <end position="146"/>
    </location>
</feature>
<feature type="region of interest" description="Disordered" evidence="2">
    <location>
        <begin position="1"/>
        <end position="51"/>
    </location>
</feature>
<feature type="compositionally biased region" description="Basic and acidic residues" evidence="2">
    <location>
        <begin position="1"/>
        <end position="13"/>
    </location>
</feature>
<feature type="compositionally biased region" description="Gly residues" evidence="2">
    <location>
        <begin position="23"/>
        <end position="35"/>
    </location>
</feature>
<feature type="compositionally biased region" description="Gly residues" evidence="2">
    <location>
        <begin position="42"/>
        <end position="51"/>
    </location>
</feature>
<reference key="1">
    <citation type="journal article" date="2002" name="Proc. Natl. Acad. Sci. U.S.A.">
        <title>Genome sequence of a serotype M3 strain of group A Streptococcus: phage-encoded toxins, the high-virulence phenotype, and clone emergence.</title>
        <authorList>
            <person name="Beres S.B."/>
            <person name="Sylva G.L."/>
            <person name="Barbian K.D."/>
            <person name="Lei B."/>
            <person name="Hoff J.S."/>
            <person name="Mammarella N.D."/>
            <person name="Liu M.-Y."/>
            <person name="Smoot J.C."/>
            <person name="Porcella S.F."/>
            <person name="Parkins L.D."/>
            <person name="Campbell D.S."/>
            <person name="Smith T.M."/>
            <person name="McCormick J.K."/>
            <person name="Leung D.Y.M."/>
            <person name="Schlievert P.M."/>
            <person name="Musser J.M."/>
        </authorList>
    </citation>
    <scope>NUCLEOTIDE SEQUENCE [LARGE SCALE GENOMIC DNA]</scope>
    <source>
        <strain>ATCC BAA-595 / MGAS315</strain>
    </source>
</reference>
<dbReference type="EMBL" id="AE014074">
    <property type="protein sequence ID" value="AAM78666.1"/>
    <property type="molecule type" value="Genomic_DNA"/>
</dbReference>
<dbReference type="RefSeq" id="WP_002986622.1">
    <property type="nucleotide sequence ID" value="NC_004070.1"/>
</dbReference>
<dbReference type="SMR" id="P0DE06"/>
<dbReference type="GeneID" id="69900045"/>
<dbReference type="KEGG" id="spg:SpyM3_0059"/>
<dbReference type="HOGENOM" id="CLU_055188_4_2_9"/>
<dbReference type="Proteomes" id="UP000000564">
    <property type="component" value="Chromosome"/>
</dbReference>
<dbReference type="GO" id="GO:0022625">
    <property type="term" value="C:cytosolic large ribosomal subunit"/>
    <property type="evidence" value="ECO:0007669"/>
    <property type="project" value="TreeGrafter"/>
</dbReference>
<dbReference type="GO" id="GO:0019843">
    <property type="term" value="F:rRNA binding"/>
    <property type="evidence" value="ECO:0007669"/>
    <property type="project" value="UniProtKB-UniRule"/>
</dbReference>
<dbReference type="GO" id="GO:0003735">
    <property type="term" value="F:structural constituent of ribosome"/>
    <property type="evidence" value="ECO:0007669"/>
    <property type="project" value="InterPro"/>
</dbReference>
<dbReference type="GO" id="GO:0006412">
    <property type="term" value="P:translation"/>
    <property type="evidence" value="ECO:0007669"/>
    <property type="project" value="UniProtKB-UniRule"/>
</dbReference>
<dbReference type="Gene3D" id="3.100.10.10">
    <property type="match status" value="1"/>
</dbReference>
<dbReference type="HAMAP" id="MF_01341">
    <property type="entry name" value="Ribosomal_uL15"/>
    <property type="match status" value="1"/>
</dbReference>
<dbReference type="InterPro" id="IPR030878">
    <property type="entry name" value="Ribosomal_uL15"/>
</dbReference>
<dbReference type="InterPro" id="IPR021131">
    <property type="entry name" value="Ribosomal_uL15/eL18"/>
</dbReference>
<dbReference type="InterPro" id="IPR036227">
    <property type="entry name" value="Ribosomal_uL15/eL18_sf"/>
</dbReference>
<dbReference type="InterPro" id="IPR005749">
    <property type="entry name" value="Ribosomal_uL15_bac-type"/>
</dbReference>
<dbReference type="InterPro" id="IPR001196">
    <property type="entry name" value="Ribosomal_uL15_CS"/>
</dbReference>
<dbReference type="NCBIfam" id="TIGR01071">
    <property type="entry name" value="rplO_bact"/>
    <property type="match status" value="1"/>
</dbReference>
<dbReference type="PANTHER" id="PTHR12934">
    <property type="entry name" value="50S RIBOSOMAL PROTEIN L15"/>
    <property type="match status" value="1"/>
</dbReference>
<dbReference type="PANTHER" id="PTHR12934:SF11">
    <property type="entry name" value="LARGE RIBOSOMAL SUBUNIT PROTEIN UL15M"/>
    <property type="match status" value="1"/>
</dbReference>
<dbReference type="Pfam" id="PF00828">
    <property type="entry name" value="Ribosomal_L27A"/>
    <property type="match status" value="1"/>
</dbReference>
<dbReference type="SUPFAM" id="SSF52080">
    <property type="entry name" value="Ribosomal proteins L15p and L18e"/>
    <property type="match status" value="1"/>
</dbReference>
<dbReference type="PROSITE" id="PS00475">
    <property type="entry name" value="RIBOSOMAL_L15"/>
    <property type="match status" value="1"/>
</dbReference>
<accession>P0DE06</accession>
<accession>Q79YR1</accession>
<accession>Q7CFK4</accession>
<comment type="function">
    <text evidence="1">Binds to the 23S rRNA.</text>
</comment>
<comment type="subunit">
    <text evidence="1">Part of the 50S ribosomal subunit.</text>
</comment>
<comment type="similarity">
    <text evidence="1">Belongs to the universal ribosomal protein uL15 family.</text>
</comment>
<proteinExistence type="inferred from homology"/>
<evidence type="ECO:0000255" key="1">
    <source>
        <dbReference type="HAMAP-Rule" id="MF_01341"/>
    </source>
</evidence>
<evidence type="ECO:0000256" key="2">
    <source>
        <dbReference type="SAM" id="MobiDB-lite"/>
    </source>
</evidence>
<evidence type="ECO:0000305" key="3"/>
<sequence>MKLHELKAAEGSRKVRNRVGRGTSSGNGKTSGRGQKGQKARSGGGVRLGFEGGQTPLFRRIPKRGFTNINTKEYALVNLDQLNVFDDGTEVTPAILKDAGIVRAEKSGVKVLGNGELTKKLTVKAAKFSKSAEAAIIAKGGSIEVI</sequence>
<name>RL15_STRP3</name>
<gene>
    <name evidence="1" type="primary">rplO</name>
    <name type="ordered locus">SpyM3_0059</name>
</gene>
<organism>
    <name type="scientific">Streptococcus pyogenes serotype M3 (strain ATCC BAA-595 / MGAS315)</name>
    <dbReference type="NCBI Taxonomy" id="198466"/>
    <lineage>
        <taxon>Bacteria</taxon>
        <taxon>Bacillati</taxon>
        <taxon>Bacillota</taxon>
        <taxon>Bacilli</taxon>
        <taxon>Lactobacillales</taxon>
        <taxon>Streptococcaceae</taxon>
        <taxon>Streptococcus</taxon>
    </lineage>
</organism>
<keyword id="KW-0687">Ribonucleoprotein</keyword>
<keyword id="KW-0689">Ribosomal protein</keyword>
<keyword id="KW-0694">RNA-binding</keyword>
<keyword id="KW-0699">rRNA-binding</keyword>